<evidence type="ECO:0000256" key="1">
    <source>
        <dbReference type="SAM" id="MobiDB-lite"/>
    </source>
</evidence>
<name>YAYE_SCHPO</name>
<accession>Q10221</accession>
<feature type="chain" id="PRO_0000116487" description="Uncharacterized protein C4H3.14c">
    <location>
        <begin position="1"/>
        <end position="345"/>
    </location>
</feature>
<feature type="region of interest" description="Disordered" evidence="1">
    <location>
        <begin position="1"/>
        <end position="24"/>
    </location>
</feature>
<feature type="region of interest" description="Disordered" evidence="1">
    <location>
        <begin position="296"/>
        <end position="345"/>
    </location>
</feature>
<feature type="compositionally biased region" description="Acidic residues" evidence="1">
    <location>
        <begin position="304"/>
        <end position="323"/>
    </location>
</feature>
<feature type="compositionally biased region" description="Polar residues" evidence="1">
    <location>
        <begin position="324"/>
        <end position="345"/>
    </location>
</feature>
<gene>
    <name type="ORF">SPAC4H3.14c</name>
</gene>
<keyword id="KW-1185">Reference proteome</keyword>
<dbReference type="EMBL" id="CU329670">
    <property type="protein sequence ID" value="CAA93353.1"/>
    <property type="molecule type" value="Genomic_DNA"/>
</dbReference>
<dbReference type="PIR" id="T38894">
    <property type="entry name" value="T38894"/>
</dbReference>
<dbReference type="SMR" id="Q10221"/>
<dbReference type="BioGRID" id="279963">
    <property type="interactions" value="17"/>
</dbReference>
<dbReference type="STRING" id="284812.Q10221"/>
<dbReference type="iPTMnet" id="Q10221"/>
<dbReference type="PaxDb" id="4896-SPAC4H3.14c.1"/>
<dbReference type="EnsemblFungi" id="SPAC4H3.14c.1">
    <property type="protein sequence ID" value="SPAC4H3.14c.1:pep"/>
    <property type="gene ID" value="SPAC4H3.14c"/>
</dbReference>
<dbReference type="KEGG" id="spo:2543546"/>
<dbReference type="PomBase" id="SPAC4H3.14c"/>
<dbReference type="VEuPathDB" id="FungiDB:SPAC4H3.14c"/>
<dbReference type="eggNOG" id="ENOG502RR8M">
    <property type="taxonomic scope" value="Eukaryota"/>
</dbReference>
<dbReference type="HOGENOM" id="CLU_847751_0_0_1"/>
<dbReference type="InParanoid" id="Q10221"/>
<dbReference type="OMA" id="YRVELEY"/>
<dbReference type="PhylomeDB" id="Q10221"/>
<dbReference type="PRO" id="PR:Q10221"/>
<dbReference type="Proteomes" id="UP000002485">
    <property type="component" value="Chromosome I"/>
</dbReference>
<dbReference type="GO" id="GO:0005829">
    <property type="term" value="C:cytosol"/>
    <property type="evidence" value="ECO:0007005"/>
    <property type="project" value="PomBase"/>
</dbReference>
<dbReference type="GO" id="GO:0070648">
    <property type="term" value="C:formin-nucleated actin cable"/>
    <property type="evidence" value="ECO:0000314"/>
    <property type="project" value="PomBase"/>
</dbReference>
<dbReference type="GO" id="GO:0110085">
    <property type="term" value="C:mitotic actomyosin contractile ring"/>
    <property type="evidence" value="ECO:0000314"/>
    <property type="project" value="PomBase"/>
</dbReference>
<dbReference type="GO" id="GO:0005634">
    <property type="term" value="C:nucleus"/>
    <property type="evidence" value="ECO:0007005"/>
    <property type="project" value="PomBase"/>
</dbReference>
<dbReference type="GO" id="GO:0071520">
    <property type="term" value="P:actomyosin contractile ring assembly actin filament bundle convergence"/>
    <property type="evidence" value="ECO:0000315"/>
    <property type="project" value="PomBase"/>
</dbReference>
<dbReference type="GO" id="GO:0000747">
    <property type="term" value="P:conjugation with cellular fusion"/>
    <property type="evidence" value="ECO:0000315"/>
    <property type="project" value="PomBase"/>
</dbReference>
<dbReference type="GO" id="GO:1904600">
    <property type="term" value="P:mating projection actin fusion focus assembly"/>
    <property type="evidence" value="ECO:0000315"/>
    <property type="project" value="PomBase"/>
</dbReference>
<dbReference type="GO" id="GO:0000281">
    <property type="term" value="P:mitotic cytokinesis"/>
    <property type="evidence" value="ECO:0000315"/>
    <property type="project" value="PomBase"/>
</dbReference>
<protein>
    <recommendedName>
        <fullName>Uncharacterized protein C4H3.14c</fullName>
    </recommendedName>
</protein>
<proteinExistence type="predicted"/>
<organism>
    <name type="scientific">Schizosaccharomyces pombe (strain 972 / ATCC 24843)</name>
    <name type="common">Fission yeast</name>
    <dbReference type="NCBI Taxonomy" id="284812"/>
    <lineage>
        <taxon>Eukaryota</taxon>
        <taxon>Fungi</taxon>
        <taxon>Dikarya</taxon>
        <taxon>Ascomycota</taxon>
        <taxon>Taphrinomycotina</taxon>
        <taxon>Schizosaccharomycetes</taxon>
        <taxon>Schizosaccharomycetales</taxon>
        <taxon>Schizosaccharomycetaceae</taxon>
        <taxon>Schizosaccharomyces</taxon>
    </lineage>
</organism>
<sequence length="345" mass="39800">MGLEGSEKLEHEIEQVHDNIENRKEEVSTLQDMANDLEKLTDHIEATYIGRGVPHDHAKTGSRKPSSGQLIATMQNEIDRLKKEGDKVSILLMQERKKRKELESAKNNLLNVYDSLKMQKASVSSMVNRKQRAAKEEQKIQEEFERQITDLLEEQQQLKLEIERLEAETERANSETEQYEKQKEALEEEYEELRNECLKHDPQLDAEIRTLQDTFEEVERTLTKQVSDAKIADKPLKDSMFNSNSEKEKIMHALEKAEKDADIYSEFIQQYMEQLESSLEKSSTAIENAQNRLAEMTAHLAESSDYDNDDDTDGIINETDYELDTSQSEFATLTTSSNKSILNES</sequence>
<reference key="1">
    <citation type="journal article" date="2002" name="Nature">
        <title>The genome sequence of Schizosaccharomyces pombe.</title>
        <authorList>
            <person name="Wood V."/>
            <person name="Gwilliam R."/>
            <person name="Rajandream M.A."/>
            <person name="Lyne M.H."/>
            <person name="Lyne R."/>
            <person name="Stewart A."/>
            <person name="Sgouros J.G."/>
            <person name="Peat N."/>
            <person name="Hayles J."/>
            <person name="Baker S.G."/>
            <person name="Basham D."/>
            <person name="Bowman S."/>
            <person name="Brooks K."/>
            <person name="Brown D."/>
            <person name="Brown S."/>
            <person name="Chillingworth T."/>
            <person name="Churcher C.M."/>
            <person name="Collins M."/>
            <person name="Connor R."/>
            <person name="Cronin A."/>
            <person name="Davis P."/>
            <person name="Feltwell T."/>
            <person name="Fraser A."/>
            <person name="Gentles S."/>
            <person name="Goble A."/>
            <person name="Hamlin N."/>
            <person name="Harris D.E."/>
            <person name="Hidalgo J."/>
            <person name="Hodgson G."/>
            <person name="Holroyd S."/>
            <person name="Hornsby T."/>
            <person name="Howarth S."/>
            <person name="Huckle E.J."/>
            <person name="Hunt S."/>
            <person name="Jagels K."/>
            <person name="James K.D."/>
            <person name="Jones L."/>
            <person name="Jones M."/>
            <person name="Leather S."/>
            <person name="McDonald S."/>
            <person name="McLean J."/>
            <person name="Mooney P."/>
            <person name="Moule S."/>
            <person name="Mungall K.L."/>
            <person name="Murphy L.D."/>
            <person name="Niblett D."/>
            <person name="Odell C."/>
            <person name="Oliver K."/>
            <person name="O'Neil S."/>
            <person name="Pearson D."/>
            <person name="Quail M.A."/>
            <person name="Rabbinowitsch E."/>
            <person name="Rutherford K.M."/>
            <person name="Rutter S."/>
            <person name="Saunders D."/>
            <person name="Seeger K."/>
            <person name="Sharp S."/>
            <person name="Skelton J."/>
            <person name="Simmonds M.N."/>
            <person name="Squares R."/>
            <person name="Squares S."/>
            <person name="Stevens K."/>
            <person name="Taylor K."/>
            <person name="Taylor R.G."/>
            <person name="Tivey A."/>
            <person name="Walsh S.V."/>
            <person name="Warren T."/>
            <person name="Whitehead S."/>
            <person name="Woodward J.R."/>
            <person name="Volckaert G."/>
            <person name="Aert R."/>
            <person name="Robben J."/>
            <person name="Grymonprez B."/>
            <person name="Weltjens I."/>
            <person name="Vanstreels E."/>
            <person name="Rieger M."/>
            <person name="Schaefer M."/>
            <person name="Mueller-Auer S."/>
            <person name="Gabel C."/>
            <person name="Fuchs M."/>
            <person name="Duesterhoeft A."/>
            <person name="Fritzc C."/>
            <person name="Holzer E."/>
            <person name="Moestl D."/>
            <person name="Hilbert H."/>
            <person name="Borzym K."/>
            <person name="Langer I."/>
            <person name="Beck A."/>
            <person name="Lehrach H."/>
            <person name="Reinhardt R."/>
            <person name="Pohl T.M."/>
            <person name="Eger P."/>
            <person name="Zimmermann W."/>
            <person name="Wedler H."/>
            <person name="Wambutt R."/>
            <person name="Purnelle B."/>
            <person name="Goffeau A."/>
            <person name="Cadieu E."/>
            <person name="Dreano S."/>
            <person name="Gloux S."/>
            <person name="Lelaure V."/>
            <person name="Mottier S."/>
            <person name="Galibert F."/>
            <person name="Aves S.J."/>
            <person name="Xiang Z."/>
            <person name="Hunt C."/>
            <person name="Moore K."/>
            <person name="Hurst S.M."/>
            <person name="Lucas M."/>
            <person name="Rochet M."/>
            <person name="Gaillardin C."/>
            <person name="Tallada V.A."/>
            <person name="Garzon A."/>
            <person name="Thode G."/>
            <person name="Daga R.R."/>
            <person name="Cruzado L."/>
            <person name="Jimenez J."/>
            <person name="Sanchez M."/>
            <person name="del Rey F."/>
            <person name="Benito J."/>
            <person name="Dominguez A."/>
            <person name="Revuelta J.L."/>
            <person name="Moreno S."/>
            <person name="Armstrong J."/>
            <person name="Forsburg S.L."/>
            <person name="Cerutti L."/>
            <person name="Lowe T."/>
            <person name="McCombie W.R."/>
            <person name="Paulsen I."/>
            <person name="Potashkin J."/>
            <person name="Shpakovski G.V."/>
            <person name="Ussery D."/>
            <person name="Barrell B.G."/>
            <person name="Nurse P."/>
        </authorList>
    </citation>
    <scope>NUCLEOTIDE SEQUENCE [LARGE SCALE GENOMIC DNA]</scope>
    <source>
        <strain>972 / ATCC 24843</strain>
    </source>
</reference>